<feature type="chain" id="PRO_1000133051" description="Probable GTP-binding protein EngB">
    <location>
        <begin position="1"/>
        <end position="204"/>
    </location>
</feature>
<feature type="domain" description="EngB-type G" evidence="1">
    <location>
        <begin position="22"/>
        <end position="197"/>
    </location>
</feature>
<feature type="binding site" evidence="1">
    <location>
        <begin position="30"/>
        <end position="37"/>
    </location>
    <ligand>
        <name>GTP</name>
        <dbReference type="ChEBI" id="CHEBI:37565"/>
    </ligand>
</feature>
<feature type="binding site" evidence="1">
    <location>
        <position position="37"/>
    </location>
    <ligand>
        <name>Mg(2+)</name>
        <dbReference type="ChEBI" id="CHEBI:18420"/>
    </ligand>
</feature>
<feature type="binding site" evidence="1">
    <location>
        <begin position="57"/>
        <end position="61"/>
    </location>
    <ligand>
        <name>GTP</name>
        <dbReference type="ChEBI" id="CHEBI:37565"/>
    </ligand>
</feature>
<feature type="binding site" evidence="1">
    <location>
        <position position="59"/>
    </location>
    <ligand>
        <name>Mg(2+)</name>
        <dbReference type="ChEBI" id="CHEBI:18420"/>
    </ligand>
</feature>
<feature type="binding site" evidence="1">
    <location>
        <begin position="75"/>
        <end position="78"/>
    </location>
    <ligand>
        <name>GTP</name>
        <dbReference type="ChEBI" id="CHEBI:37565"/>
    </ligand>
</feature>
<feature type="binding site" evidence="1">
    <location>
        <begin position="144"/>
        <end position="147"/>
    </location>
    <ligand>
        <name>GTP</name>
        <dbReference type="ChEBI" id="CHEBI:37565"/>
    </ligand>
</feature>
<feature type="binding site" evidence="1">
    <location>
        <begin position="176"/>
        <end position="178"/>
    </location>
    <ligand>
        <name>GTP</name>
        <dbReference type="ChEBI" id="CHEBI:37565"/>
    </ligand>
</feature>
<reference key="1">
    <citation type="submission" date="2009-01" db="EMBL/GenBank/DDBJ databases">
        <title>Complete sequence of Clostridium cellulolyticum H10.</title>
        <authorList>
            <consortium name="US DOE Joint Genome Institute"/>
            <person name="Lucas S."/>
            <person name="Copeland A."/>
            <person name="Lapidus A."/>
            <person name="Glavina del Rio T."/>
            <person name="Dalin E."/>
            <person name="Tice H."/>
            <person name="Bruce D."/>
            <person name="Goodwin L."/>
            <person name="Pitluck S."/>
            <person name="Chertkov O."/>
            <person name="Saunders E."/>
            <person name="Brettin T."/>
            <person name="Detter J.C."/>
            <person name="Han C."/>
            <person name="Larimer F."/>
            <person name="Land M."/>
            <person name="Hauser L."/>
            <person name="Kyrpides N."/>
            <person name="Ivanova N."/>
            <person name="Zhou J."/>
            <person name="Richardson P."/>
        </authorList>
    </citation>
    <scope>NUCLEOTIDE SEQUENCE [LARGE SCALE GENOMIC DNA]</scope>
    <source>
        <strain>ATCC 35319 / DSM 5812 / JCM 6584 / H10</strain>
    </source>
</reference>
<gene>
    <name evidence="1" type="primary">engB</name>
    <name type="ordered locus">Ccel_0898</name>
</gene>
<comment type="function">
    <text evidence="1">Necessary for normal cell division and for the maintenance of normal septation.</text>
</comment>
<comment type="cofactor">
    <cofactor evidence="1">
        <name>Mg(2+)</name>
        <dbReference type="ChEBI" id="CHEBI:18420"/>
    </cofactor>
</comment>
<comment type="similarity">
    <text evidence="1">Belongs to the TRAFAC class TrmE-Era-EngA-EngB-Septin-like GTPase superfamily. EngB GTPase family.</text>
</comment>
<name>ENGB_RUMCH</name>
<sequence>MIIKNASHEITAVKPIQYPVTGFPEIAFVGRSNVGKSSIINTLVNRKSLARVGSTPGKTRQINFFDVNGEFYLVDLPGYGFANVSKEMKASWQNLIETYLYSRKENFLKMVVMLVDIRHSPSKDDIIMYQWLKGFGLDTLIIANKVDKISRGQIHVRINDIRKVLQLDDAEKVIPFSAENRFGLEKVLAEFDNVLSIPGEEQKD</sequence>
<protein>
    <recommendedName>
        <fullName evidence="1">Probable GTP-binding protein EngB</fullName>
    </recommendedName>
</protein>
<keyword id="KW-0131">Cell cycle</keyword>
<keyword id="KW-0132">Cell division</keyword>
<keyword id="KW-0342">GTP-binding</keyword>
<keyword id="KW-0460">Magnesium</keyword>
<keyword id="KW-0479">Metal-binding</keyword>
<keyword id="KW-0547">Nucleotide-binding</keyword>
<keyword id="KW-1185">Reference proteome</keyword>
<keyword id="KW-0717">Septation</keyword>
<accession>B8I8N7</accession>
<dbReference type="EMBL" id="CP001348">
    <property type="protein sequence ID" value="ACL75270.1"/>
    <property type="molecule type" value="Genomic_DNA"/>
</dbReference>
<dbReference type="RefSeq" id="WP_015924430.1">
    <property type="nucleotide sequence ID" value="NC_011898.1"/>
</dbReference>
<dbReference type="SMR" id="B8I8N7"/>
<dbReference type="STRING" id="394503.Ccel_0898"/>
<dbReference type="KEGG" id="cce:Ccel_0898"/>
<dbReference type="eggNOG" id="COG0218">
    <property type="taxonomic scope" value="Bacteria"/>
</dbReference>
<dbReference type="HOGENOM" id="CLU_033732_3_0_9"/>
<dbReference type="OrthoDB" id="9804921at2"/>
<dbReference type="Proteomes" id="UP000001349">
    <property type="component" value="Chromosome"/>
</dbReference>
<dbReference type="GO" id="GO:0005829">
    <property type="term" value="C:cytosol"/>
    <property type="evidence" value="ECO:0007669"/>
    <property type="project" value="TreeGrafter"/>
</dbReference>
<dbReference type="GO" id="GO:0005525">
    <property type="term" value="F:GTP binding"/>
    <property type="evidence" value="ECO:0007669"/>
    <property type="project" value="UniProtKB-UniRule"/>
</dbReference>
<dbReference type="GO" id="GO:0046872">
    <property type="term" value="F:metal ion binding"/>
    <property type="evidence" value="ECO:0007669"/>
    <property type="project" value="UniProtKB-KW"/>
</dbReference>
<dbReference type="GO" id="GO:0000917">
    <property type="term" value="P:division septum assembly"/>
    <property type="evidence" value="ECO:0007669"/>
    <property type="project" value="UniProtKB-KW"/>
</dbReference>
<dbReference type="CDD" id="cd01876">
    <property type="entry name" value="YihA_EngB"/>
    <property type="match status" value="1"/>
</dbReference>
<dbReference type="FunFam" id="3.40.50.300:FF:000098">
    <property type="entry name" value="Probable GTP-binding protein EngB"/>
    <property type="match status" value="1"/>
</dbReference>
<dbReference type="Gene3D" id="3.40.50.300">
    <property type="entry name" value="P-loop containing nucleotide triphosphate hydrolases"/>
    <property type="match status" value="1"/>
</dbReference>
<dbReference type="HAMAP" id="MF_00321">
    <property type="entry name" value="GTPase_EngB"/>
    <property type="match status" value="1"/>
</dbReference>
<dbReference type="InterPro" id="IPR030393">
    <property type="entry name" value="G_ENGB_dom"/>
</dbReference>
<dbReference type="InterPro" id="IPR006073">
    <property type="entry name" value="GTP-bd"/>
</dbReference>
<dbReference type="InterPro" id="IPR019987">
    <property type="entry name" value="GTP-bd_ribosome_bio_YsxC"/>
</dbReference>
<dbReference type="InterPro" id="IPR027417">
    <property type="entry name" value="P-loop_NTPase"/>
</dbReference>
<dbReference type="NCBIfam" id="TIGR03598">
    <property type="entry name" value="GTPase_YsxC"/>
    <property type="match status" value="1"/>
</dbReference>
<dbReference type="PANTHER" id="PTHR11649:SF13">
    <property type="entry name" value="ENGB-TYPE G DOMAIN-CONTAINING PROTEIN"/>
    <property type="match status" value="1"/>
</dbReference>
<dbReference type="PANTHER" id="PTHR11649">
    <property type="entry name" value="MSS1/TRME-RELATED GTP-BINDING PROTEIN"/>
    <property type="match status" value="1"/>
</dbReference>
<dbReference type="Pfam" id="PF01926">
    <property type="entry name" value="MMR_HSR1"/>
    <property type="match status" value="1"/>
</dbReference>
<dbReference type="SUPFAM" id="SSF52540">
    <property type="entry name" value="P-loop containing nucleoside triphosphate hydrolases"/>
    <property type="match status" value="1"/>
</dbReference>
<dbReference type="PROSITE" id="PS51706">
    <property type="entry name" value="G_ENGB"/>
    <property type="match status" value="1"/>
</dbReference>
<evidence type="ECO:0000255" key="1">
    <source>
        <dbReference type="HAMAP-Rule" id="MF_00321"/>
    </source>
</evidence>
<proteinExistence type="inferred from homology"/>
<organism>
    <name type="scientific">Ruminiclostridium cellulolyticum (strain ATCC 35319 / DSM 5812 / JCM 6584 / H10)</name>
    <name type="common">Clostridium cellulolyticum</name>
    <dbReference type="NCBI Taxonomy" id="394503"/>
    <lineage>
        <taxon>Bacteria</taxon>
        <taxon>Bacillati</taxon>
        <taxon>Bacillota</taxon>
        <taxon>Clostridia</taxon>
        <taxon>Eubacteriales</taxon>
        <taxon>Oscillospiraceae</taxon>
        <taxon>Ruminiclostridium</taxon>
    </lineage>
</organism>